<protein>
    <recommendedName>
        <fullName evidence="1">Holliday junction branch migration complex subunit RuvA</fullName>
    </recommendedName>
</protein>
<dbReference type="EMBL" id="AM260479">
    <property type="protein sequence ID" value="CAJ91648.1"/>
    <property type="molecule type" value="Genomic_DNA"/>
</dbReference>
<dbReference type="RefSeq" id="WP_010813891.1">
    <property type="nucleotide sequence ID" value="NZ_CP039287.1"/>
</dbReference>
<dbReference type="SMR" id="Q0KEC3"/>
<dbReference type="STRING" id="381666.H16_A0498"/>
<dbReference type="KEGG" id="reh:H16_A0498"/>
<dbReference type="eggNOG" id="COG0632">
    <property type="taxonomic scope" value="Bacteria"/>
</dbReference>
<dbReference type="HOGENOM" id="CLU_087936_0_0_4"/>
<dbReference type="OrthoDB" id="5293449at2"/>
<dbReference type="Proteomes" id="UP000008210">
    <property type="component" value="Chromosome 1"/>
</dbReference>
<dbReference type="GO" id="GO:0005737">
    <property type="term" value="C:cytoplasm"/>
    <property type="evidence" value="ECO:0007669"/>
    <property type="project" value="UniProtKB-SubCell"/>
</dbReference>
<dbReference type="GO" id="GO:0009379">
    <property type="term" value="C:Holliday junction helicase complex"/>
    <property type="evidence" value="ECO:0007669"/>
    <property type="project" value="InterPro"/>
</dbReference>
<dbReference type="GO" id="GO:0048476">
    <property type="term" value="C:Holliday junction resolvase complex"/>
    <property type="evidence" value="ECO:0007669"/>
    <property type="project" value="UniProtKB-UniRule"/>
</dbReference>
<dbReference type="GO" id="GO:0005524">
    <property type="term" value="F:ATP binding"/>
    <property type="evidence" value="ECO:0007669"/>
    <property type="project" value="InterPro"/>
</dbReference>
<dbReference type="GO" id="GO:0000400">
    <property type="term" value="F:four-way junction DNA binding"/>
    <property type="evidence" value="ECO:0007669"/>
    <property type="project" value="UniProtKB-UniRule"/>
</dbReference>
<dbReference type="GO" id="GO:0009378">
    <property type="term" value="F:four-way junction helicase activity"/>
    <property type="evidence" value="ECO:0007669"/>
    <property type="project" value="InterPro"/>
</dbReference>
<dbReference type="GO" id="GO:0006310">
    <property type="term" value="P:DNA recombination"/>
    <property type="evidence" value="ECO:0007669"/>
    <property type="project" value="UniProtKB-UniRule"/>
</dbReference>
<dbReference type="GO" id="GO:0006281">
    <property type="term" value="P:DNA repair"/>
    <property type="evidence" value="ECO:0007669"/>
    <property type="project" value="UniProtKB-UniRule"/>
</dbReference>
<dbReference type="CDD" id="cd14332">
    <property type="entry name" value="UBA_RuvA_C"/>
    <property type="match status" value="1"/>
</dbReference>
<dbReference type="Gene3D" id="1.10.150.20">
    <property type="entry name" value="5' to 3' exonuclease, C-terminal subdomain"/>
    <property type="match status" value="1"/>
</dbReference>
<dbReference type="Gene3D" id="1.10.8.10">
    <property type="entry name" value="DNA helicase RuvA subunit, C-terminal domain"/>
    <property type="match status" value="1"/>
</dbReference>
<dbReference type="Gene3D" id="2.40.50.140">
    <property type="entry name" value="Nucleic acid-binding proteins"/>
    <property type="match status" value="1"/>
</dbReference>
<dbReference type="HAMAP" id="MF_00031">
    <property type="entry name" value="DNA_HJ_migration_RuvA"/>
    <property type="match status" value="1"/>
</dbReference>
<dbReference type="InterPro" id="IPR013849">
    <property type="entry name" value="DNA_helicase_Holl-junc_RuvA_I"/>
</dbReference>
<dbReference type="InterPro" id="IPR003583">
    <property type="entry name" value="Hlx-hairpin-Hlx_DNA-bd_motif"/>
</dbReference>
<dbReference type="InterPro" id="IPR012340">
    <property type="entry name" value="NA-bd_OB-fold"/>
</dbReference>
<dbReference type="InterPro" id="IPR000085">
    <property type="entry name" value="RuvA"/>
</dbReference>
<dbReference type="InterPro" id="IPR010994">
    <property type="entry name" value="RuvA_2-like"/>
</dbReference>
<dbReference type="InterPro" id="IPR011114">
    <property type="entry name" value="RuvA_C"/>
</dbReference>
<dbReference type="InterPro" id="IPR036267">
    <property type="entry name" value="RuvA_C_sf"/>
</dbReference>
<dbReference type="NCBIfam" id="TIGR00084">
    <property type="entry name" value="ruvA"/>
    <property type="match status" value="1"/>
</dbReference>
<dbReference type="Pfam" id="PF14520">
    <property type="entry name" value="HHH_5"/>
    <property type="match status" value="1"/>
</dbReference>
<dbReference type="Pfam" id="PF07499">
    <property type="entry name" value="RuvA_C"/>
    <property type="match status" value="1"/>
</dbReference>
<dbReference type="Pfam" id="PF01330">
    <property type="entry name" value="RuvA_N"/>
    <property type="match status" value="1"/>
</dbReference>
<dbReference type="SMART" id="SM00278">
    <property type="entry name" value="HhH1"/>
    <property type="match status" value="2"/>
</dbReference>
<dbReference type="SUPFAM" id="SSF46929">
    <property type="entry name" value="DNA helicase RuvA subunit, C-terminal domain"/>
    <property type="match status" value="1"/>
</dbReference>
<dbReference type="SUPFAM" id="SSF50249">
    <property type="entry name" value="Nucleic acid-binding proteins"/>
    <property type="match status" value="1"/>
</dbReference>
<dbReference type="SUPFAM" id="SSF47781">
    <property type="entry name" value="RuvA domain 2-like"/>
    <property type="match status" value="1"/>
</dbReference>
<comment type="function">
    <text evidence="1">The RuvA-RuvB-RuvC complex processes Holliday junction (HJ) DNA during genetic recombination and DNA repair, while the RuvA-RuvB complex plays an important role in the rescue of blocked DNA replication forks via replication fork reversal (RFR). RuvA specifically binds to HJ cruciform DNA, conferring on it an open structure. The RuvB hexamer acts as an ATP-dependent pump, pulling dsDNA into and through the RuvAB complex. HJ branch migration allows RuvC to scan DNA until it finds its consensus sequence, where it cleaves and resolves the cruciform DNA.</text>
</comment>
<comment type="subunit">
    <text evidence="1">Homotetramer. Forms an RuvA(8)-RuvB(12)-Holliday junction (HJ) complex. HJ DNA is sandwiched between 2 RuvA tetramers; dsDNA enters through RuvA and exits via RuvB. An RuvB hexamer assembles on each DNA strand where it exits the tetramer. Each RuvB hexamer is contacted by two RuvA subunits (via domain III) on 2 adjacent RuvB subunits; this complex drives branch migration. In the full resolvosome a probable DNA-RuvA(4)-RuvB(12)-RuvC(2) complex forms which resolves the HJ.</text>
</comment>
<comment type="subcellular location">
    <subcellularLocation>
        <location evidence="1">Cytoplasm</location>
    </subcellularLocation>
</comment>
<comment type="domain">
    <text evidence="1">Has three domains with a flexible linker between the domains II and III and assumes an 'L' shape. Domain III is highly mobile and contacts RuvB.</text>
</comment>
<comment type="similarity">
    <text evidence="1">Belongs to the RuvA family.</text>
</comment>
<evidence type="ECO:0000255" key="1">
    <source>
        <dbReference type="HAMAP-Rule" id="MF_00031"/>
    </source>
</evidence>
<gene>
    <name evidence="1" type="primary">ruvA</name>
    <name type="ordered locus">H16_A0498</name>
</gene>
<sequence length="193" mass="20181">MIGRIAGTLIEKNPPHLLVDCHGVGYEVDVPMSTFYNLPAVGQPVTLLTQLIVREDAHLLYGFGTASERNTFRELIKITGIGARMALAVLSGMSVPELAQAITLQEAGRLTRIPGIGKKTAERLLLELKGKLGAELGHVPGTPAVPDSAVDVLNALLALGYSEKEAAAAIKQVPAGTGVSDGIKLALKALSKA</sequence>
<keyword id="KW-0963">Cytoplasm</keyword>
<keyword id="KW-0227">DNA damage</keyword>
<keyword id="KW-0233">DNA recombination</keyword>
<keyword id="KW-0234">DNA repair</keyword>
<keyword id="KW-0238">DNA-binding</keyword>
<keyword id="KW-1185">Reference proteome</keyword>
<reference key="1">
    <citation type="journal article" date="2006" name="Nat. Biotechnol.">
        <title>Genome sequence of the bioplastic-producing 'Knallgas' bacterium Ralstonia eutropha H16.</title>
        <authorList>
            <person name="Pohlmann A."/>
            <person name="Fricke W.F."/>
            <person name="Reinecke F."/>
            <person name="Kusian B."/>
            <person name="Liesegang H."/>
            <person name="Cramm R."/>
            <person name="Eitinger T."/>
            <person name="Ewering C."/>
            <person name="Poetter M."/>
            <person name="Schwartz E."/>
            <person name="Strittmatter A."/>
            <person name="Voss I."/>
            <person name="Gottschalk G."/>
            <person name="Steinbuechel A."/>
            <person name="Friedrich B."/>
            <person name="Bowien B."/>
        </authorList>
    </citation>
    <scope>NUCLEOTIDE SEQUENCE [LARGE SCALE GENOMIC DNA]</scope>
    <source>
        <strain>ATCC 17699 / DSM 428 / KCTC 22496 / NCIMB 10442 / H16 / Stanier 337</strain>
    </source>
</reference>
<accession>Q0KEC3</accession>
<name>RUVA_CUPNH</name>
<feature type="chain" id="PRO_1000002523" description="Holliday junction branch migration complex subunit RuvA">
    <location>
        <begin position="1"/>
        <end position="193"/>
    </location>
</feature>
<feature type="region of interest" description="Domain I" evidence="1">
    <location>
        <begin position="1"/>
        <end position="64"/>
    </location>
</feature>
<feature type="region of interest" description="Domain II" evidence="1">
    <location>
        <begin position="65"/>
        <end position="143"/>
    </location>
</feature>
<feature type="region of interest" description="Flexible linker" evidence="1">
    <location>
        <begin position="144"/>
        <end position="151"/>
    </location>
</feature>
<feature type="region of interest" description="Domain III" evidence="1">
    <location>
        <begin position="151"/>
        <end position="193"/>
    </location>
</feature>
<proteinExistence type="inferred from homology"/>
<organism>
    <name type="scientific">Cupriavidus necator (strain ATCC 17699 / DSM 428 / KCTC 22496 / NCIMB 10442 / H16 / Stanier 337)</name>
    <name type="common">Ralstonia eutropha</name>
    <dbReference type="NCBI Taxonomy" id="381666"/>
    <lineage>
        <taxon>Bacteria</taxon>
        <taxon>Pseudomonadati</taxon>
        <taxon>Pseudomonadota</taxon>
        <taxon>Betaproteobacteria</taxon>
        <taxon>Burkholderiales</taxon>
        <taxon>Burkholderiaceae</taxon>
        <taxon>Cupriavidus</taxon>
    </lineage>
</organism>